<feature type="chain" id="PRO_0000292694" description="tRNA 2-selenouridine synthase">
    <location>
        <begin position="1"/>
        <end position="371"/>
    </location>
</feature>
<feature type="domain" description="Rhodanese" evidence="1">
    <location>
        <begin position="14"/>
        <end position="137"/>
    </location>
</feature>
<feature type="active site" description="S-selanylcysteine intermediate" evidence="1">
    <location>
        <position position="97"/>
    </location>
</feature>
<reference key="1">
    <citation type="journal article" date="2008" name="BMC Genomics">
        <title>The genome of Aeromonas salmonicida subsp. salmonicida A449: insights into the evolution of a fish pathogen.</title>
        <authorList>
            <person name="Reith M.E."/>
            <person name="Singh R.K."/>
            <person name="Curtis B."/>
            <person name="Boyd J.M."/>
            <person name="Bouevitch A."/>
            <person name="Kimball J."/>
            <person name="Munholland J."/>
            <person name="Murphy C."/>
            <person name="Sarty D."/>
            <person name="Williams J."/>
            <person name="Nash J.H."/>
            <person name="Johnson S.C."/>
            <person name="Brown L.L."/>
        </authorList>
    </citation>
    <scope>NUCLEOTIDE SEQUENCE [LARGE SCALE GENOMIC DNA]</scope>
    <source>
        <strain>A449</strain>
    </source>
</reference>
<organism>
    <name type="scientific">Aeromonas salmonicida (strain A449)</name>
    <dbReference type="NCBI Taxonomy" id="382245"/>
    <lineage>
        <taxon>Bacteria</taxon>
        <taxon>Pseudomonadati</taxon>
        <taxon>Pseudomonadota</taxon>
        <taxon>Gammaproteobacteria</taxon>
        <taxon>Aeromonadales</taxon>
        <taxon>Aeromonadaceae</taxon>
        <taxon>Aeromonas</taxon>
    </lineage>
</organism>
<evidence type="ECO:0000255" key="1">
    <source>
        <dbReference type="HAMAP-Rule" id="MF_01622"/>
    </source>
</evidence>
<name>SELU_AERS4</name>
<protein>
    <recommendedName>
        <fullName evidence="1">tRNA 2-selenouridine synthase</fullName>
        <ecNumber evidence="1">2.9.1.3</ecNumber>
    </recommendedName>
</protein>
<proteinExistence type="inferred from homology"/>
<comment type="function">
    <text evidence="1">Involved in the post-transcriptional modification of the uridine at the wobble position (U34) of tRNA(Lys), tRNA(Glu) and tRNA(Gln). Catalyzes the conversion of 2-thiouridine (S2U-RNA) to 2-selenouridine (Se2U-RNA). Acts in a two-step process involving geranylation of 2-thiouridine (S2U) to S-geranyl-2-thiouridine (geS2U) and subsequent selenation of the latter derivative to 2-selenouridine (Se2U) in the tRNA chain.</text>
</comment>
<comment type="catalytic activity">
    <reaction evidence="1">
        <text>5-methylaminomethyl-2-thiouridine(34) in tRNA + selenophosphate + (2E)-geranyl diphosphate + H2O + H(+) = 5-methylaminomethyl-2-selenouridine(34) in tRNA + (2E)-thiogeraniol + phosphate + diphosphate</text>
        <dbReference type="Rhea" id="RHEA:42716"/>
        <dbReference type="Rhea" id="RHEA-COMP:10195"/>
        <dbReference type="Rhea" id="RHEA-COMP:10196"/>
        <dbReference type="ChEBI" id="CHEBI:15377"/>
        <dbReference type="ChEBI" id="CHEBI:15378"/>
        <dbReference type="ChEBI" id="CHEBI:16144"/>
        <dbReference type="ChEBI" id="CHEBI:33019"/>
        <dbReference type="ChEBI" id="CHEBI:43474"/>
        <dbReference type="ChEBI" id="CHEBI:58057"/>
        <dbReference type="ChEBI" id="CHEBI:74455"/>
        <dbReference type="ChEBI" id="CHEBI:82743"/>
        <dbReference type="ChEBI" id="CHEBI:143703"/>
        <dbReference type="EC" id="2.9.1.3"/>
    </reaction>
    <physiologicalReaction direction="left-to-right" evidence="1">
        <dbReference type="Rhea" id="RHEA:42717"/>
    </physiologicalReaction>
</comment>
<comment type="catalytic activity">
    <reaction evidence="1">
        <text>5-methylaminomethyl-2-thiouridine(34) in tRNA + (2E)-geranyl diphosphate = 5-methylaminomethyl-S-(2E)-geranyl-thiouridine(34) in tRNA + diphosphate</text>
        <dbReference type="Rhea" id="RHEA:14085"/>
        <dbReference type="Rhea" id="RHEA-COMP:10195"/>
        <dbReference type="Rhea" id="RHEA-COMP:14654"/>
        <dbReference type="ChEBI" id="CHEBI:33019"/>
        <dbReference type="ChEBI" id="CHEBI:58057"/>
        <dbReference type="ChEBI" id="CHEBI:74455"/>
        <dbReference type="ChEBI" id="CHEBI:140632"/>
    </reaction>
    <physiologicalReaction direction="left-to-right" evidence="1">
        <dbReference type="Rhea" id="RHEA:14086"/>
    </physiologicalReaction>
</comment>
<comment type="catalytic activity">
    <reaction evidence="1">
        <text>5-methylaminomethyl-S-(2E)-geranyl-thiouridine(34) in tRNA + selenophosphate + H(+) = 5-methylaminomethyl-2-(Se-phospho)selenouridine(34) in tRNA + (2E)-thiogeraniol</text>
        <dbReference type="Rhea" id="RHEA:60172"/>
        <dbReference type="Rhea" id="RHEA-COMP:14654"/>
        <dbReference type="Rhea" id="RHEA-COMP:15523"/>
        <dbReference type="ChEBI" id="CHEBI:15378"/>
        <dbReference type="ChEBI" id="CHEBI:16144"/>
        <dbReference type="ChEBI" id="CHEBI:140632"/>
        <dbReference type="ChEBI" id="CHEBI:143702"/>
        <dbReference type="ChEBI" id="CHEBI:143703"/>
    </reaction>
    <physiologicalReaction direction="left-to-right" evidence="1">
        <dbReference type="Rhea" id="RHEA:60173"/>
    </physiologicalReaction>
</comment>
<comment type="catalytic activity">
    <reaction evidence="1">
        <text>5-methylaminomethyl-2-(Se-phospho)selenouridine(34) in tRNA + H2O = 5-methylaminomethyl-2-selenouridine(34) in tRNA + phosphate</text>
        <dbReference type="Rhea" id="RHEA:60176"/>
        <dbReference type="Rhea" id="RHEA-COMP:10196"/>
        <dbReference type="Rhea" id="RHEA-COMP:15523"/>
        <dbReference type="ChEBI" id="CHEBI:15377"/>
        <dbReference type="ChEBI" id="CHEBI:43474"/>
        <dbReference type="ChEBI" id="CHEBI:82743"/>
        <dbReference type="ChEBI" id="CHEBI:143702"/>
    </reaction>
    <physiologicalReaction direction="left-to-right" evidence="1">
        <dbReference type="Rhea" id="RHEA:60177"/>
    </physiologicalReaction>
</comment>
<comment type="subunit">
    <text evidence="1">Monomer.</text>
</comment>
<comment type="similarity">
    <text evidence="1">Belongs to the SelU family.</text>
</comment>
<keyword id="KW-0711">Selenium</keyword>
<keyword id="KW-0808">Transferase</keyword>
<sequence>MSQLPLTSDLARIFLDDVPLIDLRAPIEFKEGAFPCSTSLPLMTDDERAQVGTCFKQRGQAAAIELGHQLVGGAVRAERLDGWLAQLRKQPDALLYCFRGGLRSQTVQLWLHEAGVTRPRVAGGYKEMRRFLIDTLDKAAAECHWTVLTGMTGSGKTHMLEHVTQAVDLEGHAHHRGSSFGQLPGGQPSNINFENKLAIELLKRRHQGEHAFVVEDESRLIGRCCLPNPLFDAMCEAPLVVVDVPQSERAEQIRQDYVHDLWLRYQAMFGAEEGWPLFAAYLTDALARLKRRLGDQAHRELDQLMQIALAEQANSGTTERHLAWITLLLTRYYDPMYLYQLGNKRERIVFRGEKQACLDFFAEQHAARQQG</sequence>
<dbReference type="EC" id="2.9.1.3" evidence="1"/>
<dbReference type="EMBL" id="CP000644">
    <property type="protein sequence ID" value="ABO90144.1"/>
    <property type="molecule type" value="Genomic_DNA"/>
</dbReference>
<dbReference type="SMR" id="A4SMM2"/>
<dbReference type="STRING" id="29491.GCA_000820065_00688"/>
<dbReference type="KEGG" id="asa:ASA_2078"/>
<dbReference type="eggNOG" id="COG2603">
    <property type="taxonomic scope" value="Bacteria"/>
</dbReference>
<dbReference type="HOGENOM" id="CLU_043456_1_0_6"/>
<dbReference type="Proteomes" id="UP000000225">
    <property type="component" value="Chromosome"/>
</dbReference>
<dbReference type="GO" id="GO:0016765">
    <property type="term" value="F:transferase activity, transferring alkyl or aryl (other than methyl) groups"/>
    <property type="evidence" value="ECO:0007669"/>
    <property type="project" value="UniProtKB-UniRule"/>
</dbReference>
<dbReference type="GO" id="GO:0043828">
    <property type="term" value="F:tRNA 2-selenouridine synthase activity"/>
    <property type="evidence" value="ECO:0007669"/>
    <property type="project" value="UniProtKB-EC"/>
</dbReference>
<dbReference type="GO" id="GO:0002098">
    <property type="term" value="P:tRNA wobble uridine modification"/>
    <property type="evidence" value="ECO:0007669"/>
    <property type="project" value="UniProtKB-UniRule"/>
</dbReference>
<dbReference type="Gene3D" id="3.40.250.10">
    <property type="entry name" value="Rhodanese-like domain"/>
    <property type="match status" value="1"/>
</dbReference>
<dbReference type="HAMAP" id="MF_01622">
    <property type="entry name" value="tRNA_sel_U_synth"/>
    <property type="match status" value="1"/>
</dbReference>
<dbReference type="InterPro" id="IPR001763">
    <property type="entry name" value="Rhodanese-like_dom"/>
</dbReference>
<dbReference type="InterPro" id="IPR036873">
    <property type="entry name" value="Rhodanese-like_dom_sf"/>
</dbReference>
<dbReference type="InterPro" id="IPR017582">
    <property type="entry name" value="SelU"/>
</dbReference>
<dbReference type="NCBIfam" id="NF008750">
    <property type="entry name" value="PRK11784.1-2"/>
    <property type="match status" value="1"/>
</dbReference>
<dbReference type="NCBIfam" id="NF008751">
    <property type="entry name" value="PRK11784.1-3"/>
    <property type="match status" value="1"/>
</dbReference>
<dbReference type="NCBIfam" id="TIGR03167">
    <property type="entry name" value="tRNA_sel_U_synt"/>
    <property type="match status" value="1"/>
</dbReference>
<dbReference type="PANTHER" id="PTHR30401">
    <property type="entry name" value="TRNA 2-SELENOURIDINE SYNTHASE"/>
    <property type="match status" value="1"/>
</dbReference>
<dbReference type="PANTHER" id="PTHR30401:SF0">
    <property type="entry name" value="TRNA 2-SELENOURIDINE SYNTHASE"/>
    <property type="match status" value="1"/>
</dbReference>
<dbReference type="SMART" id="SM00450">
    <property type="entry name" value="RHOD"/>
    <property type="match status" value="1"/>
</dbReference>
<dbReference type="SUPFAM" id="SSF52821">
    <property type="entry name" value="Rhodanese/Cell cycle control phosphatase"/>
    <property type="match status" value="1"/>
</dbReference>
<dbReference type="PROSITE" id="PS50206">
    <property type="entry name" value="RHODANESE_3"/>
    <property type="match status" value="1"/>
</dbReference>
<gene>
    <name evidence="1" type="primary">selU</name>
    <name type="ordered locus">ASA_2078</name>
</gene>
<accession>A4SMM2</accession>